<name>PLXD1_MOUSE</name>
<sequence>MARRAAGGAPPSARAAAAVPLRPRPHSRGPGLLPLPLLLLLGAARAGALEIQRRFPSPTPTNNFALDGTAGTVYLAAVNRLYQLSSANLSLEAEATVGPVPDSPLCHAPQLPQASCEHPRRLTDNYNKILQLDPGQGLVVACGSIYQGLCQLRRRGNISALAVSFPPAAPTAEPVTVFPSMLNVAANHPNASTVGLVLPPTSGTGGSRLLVGATYTGFGSAFFPRNRSLEDHRFENTPEIAIRSLDARGDLAKLFTFDLNPSDDNILKIKQGAKEQHKLGFVRAFLHPAVPPHSAQPYAYLALNSEARAGDKDSQARSLLARICLPRGAGGDAKKLTESYIQLGLQCAGGAGRGDLYSRLVSVFPAREQFFAVFERPQGAPGARNAPAALCAFRFDDVQAAIRAARTACFVEPAPDVVAVLDSVVQGTGPACESKRNIQLQPEQLDCGAAHLQHPLTILQPLRASPVFRAPGLTAVAVASANNYTAVFLGTATGRLLKISLNESMQVVSRRVLTVAYGEPVHHVMQFDPMDPGYLYLMTSHQMARVKVAACEVHSTCGDCVGAADAYCGWCTLETRCTLQQDCTNSSQPHFWTSASEGPSRCPAMTVLPSEIDVHRDYTGMILQISGSLPSLSGMEMACDYGNGVRTVARVPGPAYDHQIAYCNLLPRAQFPSFPAGQDHVTVEMSVRVKGHNIVSANFTIYDCSRIGQVYPHTACTSCLSTQWPCSWCIQLHSCVSNQSQCQDSPNPTSPQDCPQILPSPLAPVPTGGSQDILVPLTKATFFHGSSLECSFGLEESFEAVWANNSLVRCNQVVLHTTQKSQVFPLSLKLKGPPDRFLDSPNPMTVVVYNCAMGSPDCSQCLGREDLGHLCVWNDGCRLRGPLQPLPGTCPAPEIRAIEPLSGPLDGGTLLTIRGRNLGRRLSDVAHGVWIGSVACEPLADRYTVSEEIVCATGPAAGAFSDVVTVNVSKEGRSREQFSYVLPTVHSLEPSMGPKAGGTRITIHGSDLNVGSMLQVLVNDTDPCTDLTRTATSITCTVPGGTLPSPVPVCVRFESRGCVHGNLTFWYMQNPVITAISPGRSPVSGGRTITVAGERFHMVQNVSMAVHHIGREPTFCKVLNSTLITCPSPGALSNASAPVDFFINGRAYADEAAEELLDPAEAQRGSRFRLDYLPNPQFSTAKREKWIKHHPGEPLTLVIHKEQDSLGLESHEYHIKIGQVSCDIQIISDRVIHCSVNESLGTAEGQLPITIQVGNFNQTIATLQLGGSETAIVVSIVICSVLLLLSVVALFVFCTKSRRAERYWQKTLLQMEEMESQIREEIRKGFAELQTDMTDLTKELNRSQGIPFLEYKHFVTRTFFPKCSSLYEERYVLPSKTLNSQGGSPPQETHPLLGEWNIPEHCRPSMEEGISLFSSLLNNKHFLIVFVHALEQQKDFAVRDRCSLASLLTIALHGKLEYYTSIMKELLVDLIDASAAKNPKLMLRRTESVVEKMLTNWMSICMYGCLRETVGEPFFLLLCAIKQQINKGSIDAITGKARYTLNEEWLLRENIEAKPRNLNVSFQGCGMDSLSVRAMDTDTLTQVKEKILEAFCKNVPYSQWPRAEDVDLEWFASSTQSYVLRDLDDTSVVEDGRKKLNTLAHYKIPEGASLAMSLTDKKDSTLGRVKDLDTEKYFHLVLPTDELVEPKKSHRQSHRKKVLPEIYLTRLLSTKGTLQKFLDDLFKAILSIREDKPPLAVKYFFDFLEEQAEKRGISDPDTLHIWKTNSLPLRFWVNILKNPQFVFDIEKTDHIDACLSVIAQAFIDACSISDLQLGKDSPTNKLLYAKEIPEYRKTVQRYYKQIQDMTPLSEQEMNAHLAEESRKYQNEFNTNVAMAEIYKYAKRYRPQIMAALEANPTARRTQLQHKFEQVVALMENNIYECYSEA</sequence>
<gene>
    <name type="primary">Plxnd1</name>
</gene>
<comment type="function">
    <text evidence="5 6 7 8 9 10">Cell surface receptor for SEMA4A and for class 3 semaphorins, such as SEMA3A, SEMA3C and SEMA3E. Plays an important role in cell-cell signaling, and in regulating the migration of a wide spectrum of cell types. Regulates the migration of thymocytes in the medulla. Regulates endothelial cell migration. Plays an important role in ensuring the specificity of synapse formation. Mediates anti-angiogenic signaling in response to SEMA3E. Required for normal development of the heart and vasculature.</text>
</comment>
<comment type="subunit">
    <text evidence="1 5 6">Interacts with NRP1 and SEMA4A (PubMed:15239958, PubMed:17318185). Interacts with SH3BP1; they dissociate upon SEMA3E binding to PLXND1 allowing SH3BP1 to transduce downstream signal through RAC1 inactivation (By similarity).</text>
</comment>
<comment type="subcellular location">
    <subcellularLocation>
        <location evidence="6 8">Cell membrane</location>
        <topology evidence="6 8">Single-pass membrane protein</topology>
    </subcellularLocation>
    <subcellularLocation>
        <location evidence="1">Cell projection</location>
        <location evidence="1">Lamellipodium membrane</location>
    </subcellularLocation>
</comment>
<comment type="tissue specificity">
    <text evidence="7">Detected in embryonic heart and vascular endothelium, brain, dorsal root ganglia, adrenal gland, lung mesenchyme, small intestine and in the ossification centers of vertebral bodies.</text>
</comment>
<comment type="disruption phenotype">
    <text evidence="5 7">Neonate lethality, due to defects in the development of the heart outflow tract and in aortic arch patterning, plus defects in peripheral vasculature. Mice also display skeletal defects, but these may be caused by defects in the embryonic vasculature.</text>
</comment>
<comment type="similarity">
    <text evidence="11">Belongs to the plexin family.</text>
</comment>
<proteinExistence type="evidence at protein level"/>
<protein>
    <recommendedName>
        <fullName>Plexin-D1</fullName>
    </recommendedName>
</protein>
<evidence type="ECO:0000250" key="1">
    <source>
        <dbReference type="UniProtKB" id="Q9Y4D7"/>
    </source>
</evidence>
<evidence type="ECO:0000255" key="2"/>
<evidence type="ECO:0000255" key="3">
    <source>
        <dbReference type="PROSITE-ProRule" id="PRU00352"/>
    </source>
</evidence>
<evidence type="ECO:0000256" key="4">
    <source>
        <dbReference type="SAM" id="MobiDB-lite"/>
    </source>
</evidence>
<evidence type="ECO:0000269" key="5">
    <source>
    </source>
</evidence>
<evidence type="ECO:0000269" key="6">
    <source>
    </source>
</evidence>
<evidence type="ECO:0000269" key="7">
    <source>
    </source>
</evidence>
<evidence type="ECO:0000269" key="8">
    <source>
    </source>
</evidence>
<evidence type="ECO:0000269" key="9">
    <source>
    </source>
</evidence>
<evidence type="ECO:0000269" key="10">
    <source>
    </source>
</evidence>
<evidence type="ECO:0000305" key="11"/>
<evidence type="ECO:0007829" key="12">
    <source>
        <dbReference type="PDB" id="5V6R"/>
    </source>
</evidence>
<evidence type="ECO:0007829" key="13">
    <source>
        <dbReference type="PDB" id="5V6T"/>
    </source>
</evidence>
<organism>
    <name type="scientific">Mus musculus</name>
    <name type="common">Mouse</name>
    <dbReference type="NCBI Taxonomy" id="10090"/>
    <lineage>
        <taxon>Eukaryota</taxon>
        <taxon>Metazoa</taxon>
        <taxon>Chordata</taxon>
        <taxon>Craniata</taxon>
        <taxon>Vertebrata</taxon>
        <taxon>Euteleostomi</taxon>
        <taxon>Mammalia</taxon>
        <taxon>Eutheria</taxon>
        <taxon>Euarchontoglires</taxon>
        <taxon>Glires</taxon>
        <taxon>Rodentia</taxon>
        <taxon>Myomorpha</taxon>
        <taxon>Muroidea</taxon>
        <taxon>Muridae</taxon>
        <taxon>Murinae</taxon>
        <taxon>Mus</taxon>
        <taxon>Mus</taxon>
    </lineage>
</organism>
<dbReference type="EMBL" id="AY688678">
    <property type="protein sequence ID" value="AAT99561.1"/>
    <property type="molecule type" value="mRNA"/>
</dbReference>
<dbReference type="EMBL" id="AK147513">
    <property type="protein sequence ID" value="BAE27964.1"/>
    <property type="molecule type" value="mRNA"/>
</dbReference>
<dbReference type="EMBL" id="AC139761">
    <property type="status" value="NOT_ANNOTATED_CDS"/>
    <property type="molecule type" value="Genomic_DNA"/>
</dbReference>
<dbReference type="CCDS" id="CCDS20448.1"/>
<dbReference type="RefSeq" id="NP_080652.2">
    <property type="nucleotide sequence ID" value="NM_026376.4"/>
</dbReference>
<dbReference type="PDB" id="5V6R">
    <property type="method" value="X-ray"/>
    <property type="resolution" value="2.70 A"/>
    <property type="chains" value="A/B=1339-1925"/>
</dbReference>
<dbReference type="PDB" id="5V6T">
    <property type="method" value="X-ray"/>
    <property type="resolution" value="3.19 A"/>
    <property type="chains" value="A=1339-1925"/>
</dbReference>
<dbReference type="PDBsum" id="5V6R"/>
<dbReference type="PDBsum" id="5V6T"/>
<dbReference type="SMR" id="Q3UH93"/>
<dbReference type="BioGRID" id="212439">
    <property type="interactions" value="9"/>
</dbReference>
<dbReference type="CORUM" id="Q3UH93"/>
<dbReference type="FunCoup" id="Q3UH93">
    <property type="interactions" value="178"/>
</dbReference>
<dbReference type="IntAct" id="Q3UH93">
    <property type="interactions" value="1"/>
</dbReference>
<dbReference type="MINT" id="Q3UH93"/>
<dbReference type="STRING" id="10090.ENSMUSP00000015511"/>
<dbReference type="GlyConnect" id="2597">
    <property type="glycosylation" value="2 N-Linked glycans (4 sites)"/>
</dbReference>
<dbReference type="GlyCosmos" id="Q3UH93">
    <property type="glycosylation" value="9 sites, 2 glycans"/>
</dbReference>
<dbReference type="GlyGen" id="Q3UH93">
    <property type="glycosylation" value="15 sites, 9 N-linked glycans (9 sites), 1 O-linked glycan (1 site)"/>
</dbReference>
<dbReference type="iPTMnet" id="Q3UH93"/>
<dbReference type="PhosphoSitePlus" id="Q3UH93"/>
<dbReference type="PaxDb" id="10090-ENSMUSP00000015511"/>
<dbReference type="PeptideAtlas" id="Q3UH93"/>
<dbReference type="ProteomicsDB" id="289944"/>
<dbReference type="Pumba" id="Q3UH93"/>
<dbReference type="ABCD" id="Q3UH93">
    <property type="antibodies" value="4 sequenced antibodies"/>
</dbReference>
<dbReference type="Antibodypedia" id="33285">
    <property type="antibodies" value="245 antibodies from 33 providers"/>
</dbReference>
<dbReference type="DNASU" id="67784"/>
<dbReference type="Ensembl" id="ENSMUST00000015511.15">
    <property type="protein sequence ID" value="ENSMUSP00000015511.9"/>
    <property type="gene ID" value="ENSMUSG00000030123.16"/>
</dbReference>
<dbReference type="GeneID" id="67784"/>
<dbReference type="KEGG" id="mmu:67784"/>
<dbReference type="UCSC" id="uc009djn.1">
    <property type="organism name" value="mouse"/>
</dbReference>
<dbReference type="AGR" id="MGI:2154244"/>
<dbReference type="CTD" id="23129"/>
<dbReference type="MGI" id="MGI:2154244">
    <property type="gene designation" value="Plxnd1"/>
</dbReference>
<dbReference type="VEuPathDB" id="HostDB:ENSMUSG00000030123"/>
<dbReference type="eggNOG" id="KOG3610">
    <property type="taxonomic scope" value="Eukaryota"/>
</dbReference>
<dbReference type="GeneTree" id="ENSGT01020000230394"/>
<dbReference type="HOGENOM" id="CLU_001436_1_1_1"/>
<dbReference type="InParanoid" id="Q3UH93"/>
<dbReference type="OMA" id="GHLCMWS"/>
<dbReference type="OrthoDB" id="125363at2759"/>
<dbReference type="PhylomeDB" id="Q3UH93"/>
<dbReference type="TreeFam" id="TF312962"/>
<dbReference type="Reactome" id="R-MMU-416700">
    <property type="pathway name" value="Other semaphorin interactions"/>
</dbReference>
<dbReference type="Reactome" id="R-MMU-9696270">
    <property type="pathway name" value="RND2 GTPase cycle"/>
</dbReference>
<dbReference type="BioGRID-ORCS" id="67784">
    <property type="hits" value="1 hit in 78 CRISPR screens"/>
</dbReference>
<dbReference type="ChiTaRS" id="Plxnd1">
    <property type="organism name" value="mouse"/>
</dbReference>
<dbReference type="PRO" id="PR:Q3UH93"/>
<dbReference type="Proteomes" id="UP000000589">
    <property type="component" value="Chromosome 6"/>
</dbReference>
<dbReference type="RNAct" id="Q3UH93">
    <property type="molecule type" value="protein"/>
</dbReference>
<dbReference type="Bgee" id="ENSMUSG00000030123">
    <property type="expression patterns" value="Expressed in cortical plate and 220 other cell types or tissues"/>
</dbReference>
<dbReference type="ExpressionAtlas" id="Q3UH93">
    <property type="expression patterns" value="baseline and differential"/>
</dbReference>
<dbReference type="GO" id="GO:0030424">
    <property type="term" value="C:axon"/>
    <property type="evidence" value="ECO:0000314"/>
    <property type="project" value="ARUK-UCL"/>
</dbReference>
<dbReference type="GO" id="GO:0044297">
    <property type="term" value="C:cell body"/>
    <property type="evidence" value="ECO:0000314"/>
    <property type="project" value="ARUK-UCL"/>
</dbReference>
<dbReference type="GO" id="GO:0098978">
    <property type="term" value="C:glutamatergic synapse"/>
    <property type="evidence" value="ECO:0000314"/>
    <property type="project" value="SynGO"/>
</dbReference>
<dbReference type="GO" id="GO:0031258">
    <property type="term" value="C:lamellipodium membrane"/>
    <property type="evidence" value="ECO:0007669"/>
    <property type="project" value="UniProtKB-SubCell"/>
</dbReference>
<dbReference type="GO" id="GO:0005886">
    <property type="term" value="C:plasma membrane"/>
    <property type="evidence" value="ECO:0000314"/>
    <property type="project" value="UniProtKB"/>
</dbReference>
<dbReference type="GO" id="GO:0019904">
    <property type="term" value="F:protein domain specific binding"/>
    <property type="evidence" value="ECO:0007669"/>
    <property type="project" value="Ensembl"/>
</dbReference>
<dbReference type="GO" id="GO:0017154">
    <property type="term" value="F:semaphorin receptor activity"/>
    <property type="evidence" value="ECO:0000314"/>
    <property type="project" value="UniProtKB"/>
</dbReference>
<dbReference type="GO" id="GO:0001525">
    <property type="term" value="P:angiogenesis"/>
    <property type="evidence" value="ECO:0000315"/>
    <property type="project" value="UniProtKB"/>
</dbReference>
<dbReference type="GO" id="GO:0035904">
    <property type="term" value="P:aorta development"/>
    <property type="evidence" value="ECO:0000315"/>
    <property type="project" value="MGI"/>
</dbReference>
<dbReference type="GO" id="GO:0001569">
    <property type="term" value="P:branching involved in blood vessel morphogenesis"/>
    <property type="evidence" value="ECO:0000315"/>
    <property type="project" value="MGI"/>
</dbReference>
<dbReference type="GO" id="GO:0003279">
    <property type="term" value="P:cardiac septum development"/>
    <property type="evidence" value="ECO:0000315"/>
    <property type="project" value="MGI"/>
</dbReference>
<dbReference type="GO" id="GO:0060976">
    <property type="term" value="P:coronary vasculature development"/>
    <property type="evidence" value="ECO:0000315"/>
    <property type="project" value="MGI"/>
</dbReference>
<dbReference type="GO" id="GO:0060666">
    <property type="term" value="P:dichotomous subdivision of terminal units involved in salivary gland branching"/>
    <property type="evidence" value="ECO:0000314"/>
    <property type="project" value="MGI"/>
</dbReference>
<dbReference type="GO" id="GO:0043542">
    <property type="term" value="P:endothelial cell migration"/>
    <property type="evidence" value="ECO:0000315"/>
    <property type="project" value="UniProtKB"/>
</dbReference>
<dbReference type="GO" id="GO:0001822">
    <property type="term" value="P:kidney development"/>
    <property type="evidence" value="ECO:0000315"/>
    <property type="project" value="MGI"/>
</dbReference>
<dbReference type="GO" id="GO:0043524">
    <property type="term" value="P:negative regulation of neuron apoptotic process"/>
    <property type="evidence" value="ECO:0000315"/>
    <property type="project" value="ARUK-UCL"/>
</dbReference>
<dbReference type="GO" id="GO:0003151">
    <property type="term" value="P:outflow tract morphogenesis"/>
    <property type="evidence" value="ECO:0000315"/>
    <property type="project" value="MGI"/>
</dbReference>
<dbReference type="GO" id="GO:0045765">
    <property type="term" value="P:regulation of angiogenesis"/>
    <property type="evidence" value="ECO:0000315"/>
    <property type="project" value="UniProtKB"/>
</dbReference>
<dbReference type="GO" id="GO:0030334">
    <property type="term" value="P:regulation of cell migration"/>
    <property type="evidence" value="ECO:0000315"/>
    <property type="project" value="UniProtKB"/>
</dbReference>
<dbReference type="GO" id="GO:0071526">
    <property type="term" value="P:semaphorin-plexin signaling pathway"/>
    <property type="evidence" value="ECO:0000315"/>
    <property type="project" value="UniProtKB"/>
</dbReference>
<dbReference type="GO" id="GO:0007416">
    <property type="term" value="P:synapse assembly"/>
    <property type="evidence" value="ECO:0000315"/>
    <property type="project" value="UniProtKB"/>
</dbReference>
<dbReference type="GO" id="GO:0008039">
    <property type="term" value="P:synaptic target recognition"/>
    <property type="evidence" value="ECO:0000314"/>
    <property type="project" value="SynGO"/>
</dbReference>
<dbReference type="CDD" id="cd01180">
    <property type="entry name" value="IPT_plexin_repeat1"/>
    <property type="match status" value="1"/>
</dbReference>
<dbReference type="CDD" id="cd01179">
    <property type="entry name" value="IPT_plexin_repeat2"/>
    <property type="match status" value="1"/>
</dbReference>
<dbReference type="CDD" id="cd01181">
    <property type="entry name" value="IPT_plexin_repeat3"/>
    <property type="match status" value="1"/>
</dbReference>
<dbReference type="CDD" id="cd12788">
    <property type="entry name" value="RasGAP_plexin_D1"/>
    <property type="match status" value="1"/>
</dbReference>
<dbReference type="CDD" id="cd11247">
    <property type="entry name" value="Sema_plexin_D1"/>
    <property type="match status" value="1"/>
</dbReference>
<dbReference type="FunFam" id="1.10.506.10:FF:000024">
    <property type="entry name" value="Plexin D1"/>
    <property type="match status" value="1"/>
</dbReference>
<dbReference type="FunFam" id="1.10.506.10:FF:000025">
    <property type="entry name" value="Plexin D1"/>
    <property type="match status" value="1"/>
</dbReference>
<dbReference type="FunFam" id="2.130.10.10:FF:000386">
    <property type="entry name" value="Plexin D1"/>
    <property type="match status" value="1"/>
</dbReference>
<dbReference type="FunFam" id="2.60.40.10:FF:000630">
    <property type="entry name" value="Plexin D1"/>
    <property type="match status" value="1"/>
</dbReference>
<dbReference type="FunFam" id="2.60.40.10:FF:000728">
    <property type="entry name" value="Plexin D1"/>
    <property type="match status" value="1"/>
</dbReference>
<dbReference type="FunFam" id="2.60.40.10:FF:000843">
    <property type="entry name" value="Plexin D1"/>
    <property type="match status" value="1"/>
</dbReference>
<dbReference type="FunFam" id="2.60.40.10:FF:000868">
    <property type="entry name" value="Plexin D1"/>
    <property type="match status" value="1"/>
</dbReference>
<dbReference type="FunFam" id="2.60.40.10:FF:000927">
    <property type="entry name" value="Plexin D1"/>
    <property type="match status" value="1"/>
</dbReference>
<dbReference type="FunFam" id="3.10.20.90:FF:000098">
    <property type="entry name" value="Plexin D1"/>
    <property type="match status" value="1"/>
</dbReference>
<dbReference type="Gene3D" id="1.10.506.10">
    <property type="entry name" value="GTPase Activation - p120gap, domain 1"/>
    <property type="match status" value="2"/>
</dbReference>
<dbReference type="Gene3D" id="2.60.40.10">
    <property type="entry name" value="Immunoglobulins"/>
    <property type="match status" value="5"/>
</dbReference>
<dbReference type="Gene3D" id="3.10.20.90">
    <property type="entry name" value="Phosphatidylinositol 3-kinase Catalytic Subunit, Chain A, domain 1"/>
    <property type="match status" value="1"/>
</dbReference>
<dbReference type="Gene3D" id="2.130.10.10">
    <property type="entry name" value="YVTN repeat-like/Quinoprotein amine dehydrogenase"/>
    <property type="match status" value="1"/>
</dbReference>
<dbReference type="InterPro" id="IPR013783">
    <property type="entry name" value="Ig-like_fold"/>
</dbReference>
<dbReference type="InterPro" id="IPR014756">
    <property type="entry name" value="Ig_E-set"/>
</dbReference>
<dbReference type="InterPro" id="IPR002909">
    <property type="entry name" value="IPT_dom"/>
</dbReference>
<dbReference type="InterPro" id="IPR031148">
    <property type="entry name" value="Plexin"/>
</dbReference>
<dbReference type="InterPro" id="IPR042719">
    <property type="entry name" value="Plexin-D1_Sema"/>
</dbReference>
<dbReference type="InterPro" id="IPR013548">
    <property type="entry name" value="Plexin_cytoplasmic_RasGAP_dom"/>
</dbReference>
<dbReference type="InterPro" id="IPR046800">
    <property type="entry name" value="Plexin_RBD"/>
</dbReference>
<dbReference type="InterPro" id="IPR002165">
    <property type="entry name" value="Plexin_repeat"/>
</dbReference>
<dbReference type="InterPro" id="IPR016201">
    <property type="entry name" value="PSI"/>
</dbReference>
<dbReference type="InterPro" id="IPR008936">
    <property type="entry name" value="Rho_GTPase_activation_prot"/>
</dbReference>
<dbReference type="InterPro" id="IPR001627">
    <property type="entry name" value="Semap_dom"/>
</dbReference>
<dbReference type="InterPro" id="IPR036352">
    <property type="entry name" value="Semap_dom_sf"/>
</dbReference>
<dbReference type="InterPro" id="IPR041019">
    <property type="entry name" value="TIG1_plexin"/>
</dbReference>
<dbReference type="InterPro" id="IPR015943">
    <property type="entry name" value="WD40/YVTN_repeat-like_dom_sf"/>
</dbReference>
<dbReference type="PANTHER" id="PTHR22625">
    <property type="entry name" value="PLEXIN"/>
    <property type="match status" value="1"/>
</dbReference>
<dbReference type="PANTHER" id="PTHR22625:SF7">
    <property type="entry name" value="PLEXIN-D1"/>
    <property type="match status" value="1"/>
</dbReference>
<dbReference type="Pfam" id="PF08337">
    <property type="entry name" value="Plexin_cytopl"/>
    <property type="match status" value="1"/>
</dbReference>
<dbReference type="Pfam" id="PF20170">
    <property type="entry name" value="Plexin_RBD"/>
    <property type="match status" value="1"/>
</dbReference>
<dbReference type="Pfam" id="PF01437">
    <property type="entry name" value="PSI"/>
    <property type="match status" value="1"/>
</dbReference>
<dbReference type="Pfam" id="PF24479">
    <property type="entry name" value="PSI_PlexinA-B"/>
    <property type="match status" value="1"/>
</dbReference>
<dbReference type="Pfam" id="PF01403">
    <property type="entry name" value="Sema"/>
    <property type="match status" value="1"/>
</dbReference>
<dbReference type="Pfam" id="PF01833">
    <property type="entry name" value="TIG"/>
    <property type="match status" value="3"/>
</dbReference>
<dbReference type="Pfam" id="PF17960">
    <property type="entry name" value="TIG_plexin"/>
    <property type="match status" value="1"/>
</dbReference>
<dbReference type="SMART" id="SM00429">
    <property type="entry name" value="IPT"/>
    <property type="match status" value="3"/>
</dbReference>
<dbReference type="SMART" id="SM00423">
    <property type="entry name" value="PSI"/>
    <property type="match status" value="3"/>
</dbReference>
<dbReference type="SMART" id="SM00630">
    <property type="entry name" value="Sema"/>
    <property type="match status" value="1"/>
</dbReference>
<dbReference type="SUPFAM" id="SSF81296">
    <property type="entry name" value="E set domains"/>
    <property type="match status" value="3"/>
</dbReference>
<dbReference type="SUPFAM" id="SSF48350">
    <property type="entry name" value="GTPase activation domain, GAP"/>
    <property type="match status" value="1"/>
</dbReference>
<dbReference type="SUPFAM" id="SSF103575">
    <property type="entry name" value="Plexin repeat"/>
    <property type="match status" value="1"/>
</dbReference>
<dbReference type="SUPFAM" id="SSF101912">
    <property type="entry name" value="Sema domain"/>
    <property type="match status" value="1"/>
</dbReference>
<dbReference type="PROSITE" id="PS51004">
    <property type="entry name" value="SEMA"/>
    <property type="match status" value="1"/>
</dbReference>
<accession>Q3UH93</accession>
<accession>Q68HV1</accession>
<reference key="1">
    <citation type="submission" date="2004-07" db="EMBL/GenBank/DDBJ databases">
        <title>Identification of mouse plexin D1.</title>
        <authorList>
            <person name="Duke-Cohan J.S."/>
            <person name="Ahmed W."/>
            <person name="Reinherz E.L."/>
        </authorList>
    </citation>
    <scope>NUCLEOTIDE SEQUENCE [MRNA]</scope>
    <source>
        <strain>BALB/cJ</strain>
    </source>
</reference>
<reference key="2">
    <citation type="journal article" date="2005" name="Science">
        <title>The transcriptional landscape of the mammalian genome.</title>
        <authorList>
            <person name="Carninci P."/>
            <person name="Kasukawa T."/>
            <person name="Katayama S."/>
            <person name="Gough J."/>
            <person name="Frith M.C."/>
            <person name="Maeda N."/>
            <person name="Oyama R."/>
            <person name="Ravasi T."/>
            <person name="Lenhard B."/>
            <person name="Wells C."/>
            <person name="Kodzius R."/>
            <person name="Shimokawa K."/>
            <person name="Bajic V.B."/>
            <person name="Brenner S.E."/>
            <person name="Batalov S."/>
            <person name="Forrest A.R."/>
            <person name="Zavolan M."/>
            <person name="Davis M.J."/>
            <person name="Wilming L.G."/>
            <person name="Aidinis V."/>
            <person name="Allen J.E."/>
            <person name="Ambesi-Impiombato A."/>
            <person name="Apweiler R."/>
            <person name="Aturaliya R.N."/>
            <person name="Bailey T.L."/>
            <person name="Bansal M."/>
            <person name="Baxter L."/>
            <person name="Beisel K.W."/>
            <person name="Bersano T."/>
            <person name="Bono H."/>
            <person name="Chalk A.M."/>
            <person name="Chiu K.P."/>
            <person name="Choudhary V."/>
            <person name="Christoffels A."/>
            <person name="Clutterbuck D.R."/>
            <person name="Crowe M.L."/>
            <person name="Dalla E."/>
            <person name="Dalrymple B.P."/>
            <person name="de Bono B."/>
            <person name="Della Gatta G."/>
            <person name="di Bernardo D."/>
            <person name="Down T."/>
            <person name="Engstrom P."/>
            <person name="Fagiolini M."/>
            <person name="Faulkner G."/>
            <person name="Fletcher C.F."/>
            <person name="Fukushima T."/>
            <person name="Furuno M."/>
            <person name="Futaki S."/>
            <person name="Gariboldi M."/>
            <person name="Georgii-Hemming P."/>
            <person name="Gingeras T.R."/>
            <person name="Gojobori T."/>
            <person name="Green R.E."/>
            <person name="Gustincich S."/>
            <person name="Harbers M."/>
            <person name="Hayashi Y."/>
            <person name="Hensch T.K."/>
            <person name="Hirokawa N."/>
            <person name="Hill D."/>
            <person name="Huminiecki L."/>
            <person name="Iacono M."/>
            <person name="Ikeo K."/>
            <person name="Iwama A."/>
            <person name="Ishikawa T."/>
            <person name="Jakt M."/>
            <person name="Kanapin A."/>
            <person name="Katoh M."/>
            <person name="Kawasawa Y."/>
            <person name="Kelso J."/>
            <person name="Kitamura H."/>
            <person name="Kitano H."/>
            <person name="Kollias G."/>
            <person name="Krishnan S.P."/>
            <person name="Kruger A."/>
            <person name="Kummerfeld S.K."/>
            <person name="Kurochkin I.V."/>
            <person name="Lareau L.F."/>
            <person name="Lazarevic D."/>
            <person name="Lipovich L."/>
            <person name="Liu J."/>
            <person name="Liuni S."/>
            <person name="McWilliam S."/>
            <person name="Madan Babu M."/>
            <person name="Madera M."/>
            <person name="Marchionni L."/>
            <person name="Matsuda H."/>
            <person name="Matsuzawa S."/>
            <person name="Miki H."/>
            <person name="Mignone F."/>
            <person name="Miyake S."/>
            <person name="Morris K."/>
            <person name="Mottagui-Tabar S."/>
            <person name="Mulder N."/>
            <person name="Nakano N."/>
            <person name="Nakauchi H."/>
            <person name="Ng P."/>
            <person name="Nilsson R."/>
            <person name="Nishiguchi S."/>
            <person name="Nishikawa S."/>
            <person name="Nori F."/>
            <person name="Ohara O."/>
            <person name="Okazaki Y."/>
            <person name="Orlando V."/>
            <person name="Pang K.C."/>
            <person name="Pavan W.J."/>
            <person name="Pavesi G."/>
            <person name="Pesole G."/>
            <person name="Petrovsky N."/>
            <person name="Piazza S."/>
            <person name="Reed J."/>
            <person name="Reid J.F."/>
            <person name="Ring B.Z."/>
            <person name="Ringwald M."/>
            <person name="Rost B."/>
            <person name="Ruan Y."/>
            <person name="Salzberg S.L."/>
            <person name="Sandelin A."/>
            <person name="Schneider C."/>
            <person name="Schoenbach C."/>
            <person name="Sekiguchi K."/>
            <person name="Semple C.A."/>
            <person name="Seno S."/>
            <person name="Sessa L."/>
            <person name="Sheng Y."/>
            <person name="Shibata Y."/>
            <person name="Shimada H."/>
            <person name="Shimada K."/>
            <person name="Silva D."/>
            <person name="Sinclair B."/>
            <person name="Sperling S."/>
            <person name="Stupka E."/>
            <person name="Sugiura K."/>
            <person name="Sultana R."/>
            <person name="Takenaka Y."/>
            <person name="Taki K."/>
            <person name="Tammoja K."/>
            <person name="Tan S.L."/>
            <person name="Tang S."/>
            <person name="Taylor M.S."/>
            <person name="Tegner J."/>
            <person name="Teichmann S.A."/>
            <person name="Ueda H.R."/>
            <person name="van Nimwegen E."/>
            <person name="Verardo R."/>
            <person name="Wei C.L."/>
            <person name="Yagi K."/>
            <person name="Yamanishi H."/>
            <person name="Zabarovsky E."/>
            <person name="Zhu S."/>
            <person name="Zimmer A."/>
            <person name="Hide W."/>
            <person name="Bult C."/>
            <person name="Grimmond S.M."/>
            <person name="Teasdale R.D."/>
            <person name="Liu E.T."/>
            <person name="Brusic V."/>
            <person name="Quackenbush J."/>
            <person name="Wahlestedt C."/>
            <person name="Mattick J.S."/>
            <person name="Hume D.A."/>
            <person name="Kai C."/>
            <person name="Sasaki D."/>
            <person name="Tomaru Y."/>
            <person name="Fukuda S."/>
            <person name="Kanamori-Katayama M."/>
            <person name="Suzuki M."/>
            <person name="Aoki J."/>
            <person name="Arakawa T."/>
            <person name="Iida J."/>
            <person name="Imamura K."/>
            <person name="Itoh M."/>
            <person name="Kato T."/>
            <person name="Kawaji H."/>
            <person name="Kawagashira N."/>
            <person name="Kawashima T."/>
            <person name="Kojima M."/>
            <person name="Kondo S."/>
            <person name="Konno H."/>
            <person name="Nakano K."/>
            <person name="Ninomiya N."/>
            <person name="Nishio T."/>
            <person name="Okada M."/>
            <person name="Plessy C."/>
            <person name="Shibata K."/>
            <person name="Shiraki T."/>
            <person name="Suzuki S."/>
            <person name="Tagami M."/>
            <person name="Waki K."/>
            <person name="Watahiki A."/>
            <person name="Okamura-Oho Y."/>
            <person name="Suzuki H."/>
            <person name="Kawai J."/>
            <person name="Hayashizaki Y."/>
        </authorList>
    </citation>
    <scope>NUCLEOTIDE SEQUENCE [LARGE SCALE MRNA]</scope>
    <source>
        <strain>C57BL/6J</strain>
    </source>
</reference>
<reference key="3">
    <citation type="journal article" date="2009" name="PLoS Biol.">
        <title>Lineage-specific biology revealed by a finished genome assembly of the mouse.</title>
        <authorList>
            <person name="Church D.M."/>
            <person name="Goodstadt L."/>
            <person name="Hillier L.W."/>
            <person name="Zody M.C."/>
            <person name="Goldstein S."/>
            <person name="She X."/>
            <person name="Bult C.J."/>
            <person name="Agarwala R."/>
            <person name="Cherry J.L."/>
            <person name="DiCuccio M."/>
            <person name="Hlavina W."/>
            <person name="Kapustin Y."/>
            <person name="Meric P."/>
            <person name="Maglott D."/>
            <person name="Birtle Z."/>
            <person name="Marques A.C."/>
            <person name="Graves T."/>
            <person name="Zhou S."/>
            <person name="Teague B."/>
            <person name="Potamousis K."/>
            <person name="Churas C."/>
            <person name="Place M."/>
            <person name="Herschleb J."/>
            <person name="Runnheim R."/>
            <person name="Forrest D."/>
            <person name="Amos-Landgraf J."/>
            <person name="Schwartz D.C."/>
            <person name="Cheng Z."/>
            <person name="Lindblad-Toh K."/>
            <person name="Eichler E.E."/>
            <person name="Ponting C.P."/>
        </authorList>
    </citation>
    <scope>NUCLEOTIDE SEQUENCE [LARGE SCALE GENOMIC DNA]</scope>
    <source>
        <strain>C57BL/6J</strain>
    </source>
</reference>
<reference key="4">
    <citation type="journal article" date="2004" name="Dev. Cell">
        <title>PlexinD1 and semaphorin signaling are required in endothelial cells for cardiovascular development.</title>
        <authorList>
            <person name="Gitler A.D."/>
            <person name="Lu M.M."/>
            <person name="Epstein J.A."/>
        </authorList>
    </citation>
    <scope>DISRUPTION PHENOTYPE</scope>
    <scope>FUNCTION</scope>
    <scope>INTERACTION WITH SEMA3A; SEMA3C AND NRP1</scope>
</reference>
<reference key="5">
    <citation type="journal article" date="2007" name="EMBO J.">
        <title>Semaphorin-4A, an activator for T-cell-mediated immunity, suppresses angiogenesis via plexin-D1.</title>
        <authorList>
            <person name="Toyofuku T."/>
            <person name="Yabuki M."/>
            <person name="Kamei J."/>
            <person name="Kamei M."/>
            <person name="Makino N."/>
            <person name="Kumanogoh A."/>
            <person name="Hori M."/>
        </authorList>
    </citation>
    <scope>FUNCTION</scope>
    <scope>SUBCELLULAR LOCATION</scope>
    <scope>INTERACTION WITH SEMA3E AND SEMA4A</scope>
</reference>
<reference key="6">
    <citation type="journal article" date="2008" name="Immunity">
        <title>PlexinD1 glycoprotein controls migration of positively selected thymocytes into the medulla.</title>
        <authorList>
            <person name="Choi Y.I."/>
            <person name="Duke-Cohan J.S."/>
            <person name="Ahmed W.B."/>
            <person name="Handley M.A."/>
            <person name="Mann F."/>
            <person name="Epstein J.A."/>
            <person name="Clayton L.K."/>
            <person name="Reinherz E.L."/>
        </authorList>
    </citation>
    <scope>FUNCTION</scope>
    <scope>SUBCELLULAR LOCATION</scope>
</reference>
<reference key="7">
    <citation type="journal article" date="2009" name="Dev. Biol.">
        <title>Tie2Cre-mediated inactivation of plexinD1 results in congenital heart, vascular and skeletal defects.</title>
        <authorList>
            <person name="Zhang Y."/>
            <person name="Singh M.K."/>
            <person name="Degenhardt K.R."/>
            <person name="Lu M.M."/>
            <person name="Bennett J."/>
            <person name="Yoshida Y."/>
            <person name="Epstein J.A."/>
        </authorList>
    </citation>
    <scope>DISRUPTION PHENOTYPE</scope>
    <scope>FUNCTION</scope>
    <scope>TISSUE SPECIFICITY</scope>
</reference>
<reference key="8">
    <citation type="journal article" date="2009" name="Nature">
        <title>Specificity of sensory-motor connections encoded by Sema3e-Plxnd1 recognition.</title>
        <authorList>
            <person name="Pecho-Vrieseling E."/>
            <person name="Sigrist M."/>
            <person name="Yoshida Y."/>
            <person name="Jessell T.M."/>
            <person name="Arber S."/>
        </authorList>
    </citation>
    <scope>FUNCTION</scope>
</reference>
<reference key="9">
    <citation type="journal article" date="2010" name="Cell">
        <title>A tissue-specific atlas of mouse protein phosphorylation and expression.</title>
        <authorList>
            <person name="Huttlin E.L."/>
            <person name="Jedrychowski M.P."/>
            <person name="Elias J.E."/>
            <person name="Goswami T."/>
            <person name="Rad R."/>
            <person name="Beausoleil S.A."/>
            <person name="Villen J."/>
            <person name="Haas W."/>
            <person name="Sowa M.E."/>
            <person name="Gygi S.P."/>
        </authorList>
    </citation>
    <scope>IDENTIFICATION BY MASS SPECTROMETRY [LARGE SCALE ANALYSIS]</scope>
    <source>
        <tissue>Brain</tissue>
        <tissue>Brown adipose tissue</tissue>
        <tissue>Heart</tissue>
        <tissue>Kidney</tissue>
        <tissue>Lung</tissue>
        <tissue>Spleen</tissue>
        <tissue>Testis</tissue>
    </source>
</reference>
<reference key="10">
    <citation type="journal article" date="2012" name="Nat. Neurosci.">
        <title>Semaphorin 3E-Plexin-D1 signaling controls pathway-specific synapse formation in the striatum.</title>
        <authorList>
            <person name="Ding J.B."/>
            <person name="Oh W.J."/>
            <person name="Sabatini B.L."/>
            <person name="Gu C."/>
        </authorList>
    </citation>
    <scope>FUNCTION</scope>
</reference>
<keyword id="KW-0002">3D-structure</keyword>
<keyword id="KW-0037">Angiogenesis</keyword>
<keyword id="KW-1003">Cell membrane</keyword>
<keyword id="KW-0966">Cell projection</keyword>
<keyword id="KW-0217">Developmental protein</keyword>
<keyword id="KW-1015">Disulfide bond</keyword>
<keyword id="KW-0325">Glycoprotein</keyword>
<keyword id="KW-0472">Membrane</keyword>
<keyword id="KW-0675">Receptor</keyword>
<keyword id="KW-1185">Reference proteome</keyword>
<keyword id="KW-0677">Repeat</keyword>
<keyword id="KW-0732">Signal</keyword>
<keyword id="KW-0812">Transmembrane</keyword>
<keyword id="KW-1133">Transmembrane helix</keyword>
<feature type="signal peptide" evidence="2">
    <location>
        <begin position="1"/>
        <end position="48"/>
    </location>
</feature>
<feature type="chain" id="PRO_0000415890" description="Plexin-D1">
    <location>
        <begin position="49"/>
        <end position="1925"/>
    </location>
</feature>
<feature type="topological domain" description="Extracellular" evidence="2">
    <location>
        <begin position="49"/>
        <end position="1271"/>
    </location>
</feature>
<feature type="transmembrane region" description="Helical" evidence="2">
    <location>
        <begin position="1272"/>
        <end position="1292"/>
    </location>
</feature>
<feature type="topological domain" description="Cytoplasmic" evidence="2">
    <location>
        <begin position="1293"/>
        <end position="1925"/>
    </location>
</feature>
<feature type="domain" description="Sema" evidence="3">
    <location>
        <begin position="49"/>
        <end position="548"/>
    </location>
</feature>
<feature type="domain" description="IPT/TIG 1">
    <location>
        <begin position="893"/>
        <end position="977"/>
    </location>
</feature>
<feature type="domain" description="IPT/TIG 2">
    <location>
        <begin position="983"/>
        <end position="1065"/>
    </location>
</feature>
<feature type="domain" description="IPT/TIG 3">
    <location>
        <begin position="1071"/>
        <end position="1145"/>
    </location>
</feature>
<feature type="region of interest" description="Disordered" evidence="4">
    <location>
        <begin position="1"/>
        <end position="26"/>
    </location>
</feature>
<feature type="compositionally biased region" description="Low complexity" evidence="4">
    <location>
        <begin position="1"/>
        <end position="21"/>
    </location>
</feature>
<feature type="glycosylation site" description="N-linked (GlcNAc...) asparagine" evidence="2">
    <location>
        <position position="157"/>
    </location>
</feature>
<feature type="glycosylation site" description="N-linked (GlcNAc...) asparagine" evidence="2">
    <location>
        <position position="226"/>
    </location>
</feature>
<feature type="glycosylation site" description="N-linked (GlcNAc...) asparagine" evidence="2">
    <location>
        <position position="483"/>
    </location>
</feature>
<feature type="glycosylation site" description="N-linked (GlcNAc...) asparagine" evidence="2">
    <location>
        <position position="967"/>
    </location>
</feature>
<feature type="glycosylation site" description="N-linked (GlcNAc...) asparagine" evidence="2">
    <location>
        <position position="1120"/>
    </location>
</feature>
<feature type="disulfide bond" evidence="3">
    <location>
        <begin position="106"/>
        <end position="116"/>
    </location>
</feature>
<feature type="disulfide bond" evidence="3">
    <location>
        <begin position="142"/>
        <end position="150"/>
    </location>
</feature>
<feature type="disulfide bond" evidence="3">
    <location>
        <begin position="324"/>
        <end position="447"/>
    </location>
</feature>
<feature type="disulfide bond" evidence="3">
    <location>
        <begin position="347"/>
        <end position="391"/>
    </location>
</feature>
<feature type="disulfide bond" evidence="3">
    <location>
        <begin position="551"/>
        <end position="568"/>
    </location>
</feature>
<feature type="disulfide bond" evidence="3">
    <location>
        <begin position="557"/>
        <end position="602"/>
    </location>
</feature>
<feature type="disulfide bond" evidence="3">
    <location>
        <begin position="560"/>
        <end position="577"/>
    </location>
</feature>
<feature type="disulfide bond" evidence="3">
    <location>
        <begin position="571"/>
        <end position="583"/>
    </location>
</feature>
<feature type="disulfide bond" evidence="3">
    <location>
        <begin position="639"/>
        <end position="663"/>
    </location>
</feature>
<feature type="sequence conflict" description="In Ref. 1; AAT99561." evidence="11" ref="1">
    <original>R</original>
    <variation>W</variation>
    <location>
        <position position="14"/>
    </location>
</feature>
<feature type="helix" evidence="12">
    <location>
        <begin position="1351"/>
        <end position="1359"/>
    </location>
</feature>
<feature type="helix" evidence="12">
    <location>
        <begin position="1390"/>
        <end position="1392"/>
    </location>
</feature>
<feature type="strand" evidence="12">
    <location>
        <begin position="1400"/>
        <end position="1402"/>
    </location>
</feature>
<feature type="helix" evidence="12">
    <location>
        <begin position="1403"/>
        <end position="1417"/>
    </location>
</feature>
<feature type="helix" evidence="12">
    <location>
        <begin position="1420"/>
        <end position="1431"/>
    </location>
</feature>
<feature type="helix" evidence="12">
    <location>
        <begin position="1438"/>
        <end position="1451"/>
    </location>
</feature>
<feature type="helix" evidence="12">
    <location>
        <begin position="1452"/>
        <end position="1454"/>
    </location>
</feature>
<feature type="helix" evidence="12">
    <location>
        <begin position="1456"/>
        <end position="1473"/>
    </location>
</feature>
<feature type="turn" evidence="12">
    <location>
        <begin position="1474"/>
        <end position="1476"/>
    </location>
</feature>
<feature type="helix" evidence="12">
    <location>
        <begin position="1479"/>
        <end position="1481"/>
    </location>
</feature>
<feature type="helix" evidence="12">
    <location>
        <begin position="1489"/>
        <end position="1508"/>
    </location>
</feature>
<feature type="helix" evidence="12">
    <location>
        <begin position="1511"/>
        <end position="1525"/>
    </location>
</feature>
<feature type="turn" evidence="12">
    <location>
        <begin position="1532"/>
        <end position="1534"/>
    </location>
</feature>
<feature type="strand" evidence="12">
    <location>
        <begin position="1537"/>
        <end position="1539"/>
    </location>
</feature>
<feature type="helix" evidence="12">
    <location>
        <begin position="1543"/>
        <end position="1545"/>
    </location>
</feature>
<feature type="strand" evidence="12">
    <location>
        <begin position="1555"/>
        <end position="1562"/>
    </location>
</feature>
<feature type="strand" evidence="13">
    <location>
        <begin position="1566"/>
        <end position="1568"/>
    </location>
</feature>
<feature type="strand" evidence="12">
    <location>
        <begin position="1570"/>
        <end position="1575"/>
    </location>
</feature>
<feature type="helix" evidence="12">
    <location>
        <begin position="1580"/>
        <end position="1591"/>
    </location>
</feature>
<feature type="turn" evidence="12">
    <location>
        <begin position="1592"/>
        <end position="1594"/>
    </location>
</feature>
<feature type="helix" evidence="12">
    <location>
        <begin position="1597"/>
        <end position="1599"/>
    </location>
</feature>
<feature type="helix" evidence="12">
    <location>
        <begin position="1603"/>
        <end position="1605"/>
    </location>
</feature>
<feature type="strand" evidence="12">
    <location>
        <begin position="1606"/>
        <end position="1610"/>
    </location>
</feature>
<feature type="strand" evidence="12">
    <location>
        <begin position="1613"/>
        <end position="1615"/>
    </location>
</feature>
<feature type="strand" evidence="13">
    <location>
        <begin position="1617"/>
        <end position="1619"/>
    </location>
</feature>
<feature type="strand" evidence="12">
    <location>
        <begin position="1622"/>
        <end position="1624"/>
    </location>
</feature>
<feature type="strand" evidence="13">
    <location>
        <begin position="1628"/>
        <end position="1630"/>
    </location>
</feature>
<feature type="strand" evidence="12">
    <location>
        <begin position="1633"/>
        <end position="1635"/>
    </location>
</feature>
<feature type="turn" evidence="12">
    <location>
        <begin position="1639"/>
        <end position="1643"/>
    </location>
</feature>
<feature type="strand" evidence="12">
    <location>
        <begin position="1648"/>
        <end position="1654"/>
    </location>
</feature>
<feature type="strand" evidence="12">
    <location>
        <begin position="1672"/>
        <end position="1675"/>
    </location>
</feature>
<feature type="helix" evidence="12">
    <location>
        <begin position="1701"/>
        <end position="1725"/>
    </location>
</feature>
<feature type="strand" evidence="13">
    <location>
        <begin position="1730"/>
        <end position="1732"/>
    </location>
</feature>
<feature type="helix" evidence="12">
    <location>
        <begin position="1735"/>
        <end position="1749"/>
    </location>
</feature>
<feature type="turn" evidence="12">
    <location>
        <begin position="1750"/>
        <end position="1752"/>
    </location>
</feature>
<feature type="helix" evidence="12">
    <location>
        <begin position="1756"/>
        <end position="1764"/>
    </location>
</feature>
<feature type="turn" evidence="12">
    <location>
        <begin position="1765"/>
        <end position="1771"/>
    </location>
</feature>
<feature type="helix" evidence="12">
    <location>
        <begin position="1772"/>
        <end position="1777"/>
    </location>
</feature>
<feature type="helix" evidence="12">
    <location>
        <begin position="1779"/>
        <end position="1781"/>
    </location>
</feature>
<feature type="helix" evidence="12">
    <location>
        <begin position="1789"/>
        <end position="1806"/>
    </location>
</feature>
<feature type="helix" evidence="13">
    <location>
        <begin position="1820"/>
        <end position="1822"/>
    </location>
</feature>
<feature type="turn" evidence="12">
    <location>
        <begin position="1823"/>
        <end position="1827"/>
    </location>
</feature>
<feature type="helix" evidence="12">
    <location>
        <begin position="1828"/>
        <end position="1844"/>
    </location>
</feature>
<feature type="helix" evidence="12">
    <location>
        <begin position="1850"/>
        <end position="1863"/>
    </location>
</feature>
<feature type="strand" evidence="12">
    <location>
        <begin position="1865"/>
        <end position="1868"/>
    </location>
</feature>
<feature type="helix" evidence="12">
    <location>
        <begin position="1870"/>
        <end position="1883"/>
    </location>
</feature>
<feature type="helix" evidence="12">
    <location>
        <begin position="1885"/>
        <end position="1893"/>
    </location>
</feature>
<feature type="helix" evidence="12">
    <location>
        <begin position="1896"/>
        <end position="1900"/>
    </location>
</feature>
<feature type="helix" evidence="12">
    <location>
        <begin position="1903"/>
        <end position="1921"/>
    </location>
</feature>